<accession>Q9X405</accession>
<reference evidence="8" key="1">
    <citation type="journal article" date="1999" name="J. Bacteriol.">
        <title>Molecular analysis of a novel methanesulfonic acid monooxygenase from the methylotroph Methylosulfonomonas methylovora.</title>
        <authorList>
            <person name="de Marco P."/>
            <person name="Moradas-Ferreira P."/>
            <person name="Higgins T.P."/>
            <person name="McDonald I."/>
            <person name="Kenna E.M."/>
            <person name="Murrell J.C."/>
        </authorList>
    </citation>
    <scope>NUCLEOTIDE SEQUENCE [GENOMIC DNA]</scope>
    <scope>SUBUNIT</scope>
    <source>
        <strain evidence="8">M2</strain>
    </source>
</reference>
<reference evidence="8" key="2">
    <citation type="journal article" date="2006" name="Appl. Environ. Microbiol.">
        <title>Identification, mutagenesis, and transcriptional analysis of the methanesulfonate transport operon of Methylosulfonomonas methylovora.</title>
        <authorList>
            <person name="Jamshad M."/>
            <person name="De Marco P."/>
            <person name="Pacheco C.C."/>
            <person name="Hanczar T."/>
            <person name="Murrell J.C."/>
        </authorList>
    </citation>
    <scope>NUCLEOTIDE SEQUENCE [GENOMIC DNA]</scope>
    <scope>INDUCTION</scope>
    <source>
        <strain evidence="8">M2</strain>
    </source>
</reference>
<reference key="3">
    <citation type="journal article" date="2000" name="Eur. J. Biochem.">
        <title>Purification and partial characterization of the hydroxylase component of the methanesulfonic acid mono-oxygenase from methylosulfonomonas methylovora strain M2.</title>
        <authorList>
            <person name="Reichenbecher W."/>
            <person name="Murrell J.C."/>
        </authorList>
    </citation>
    <scope>PROTEIN SEQUENCE OF 1-20</scope>
    <scope>SUBUNIT</scope>
    <scope>CATALYTIC ACTIVITY</scope>
    <scope>SUBCELLULAR LOCATION</scope>
</reference>
<reference key="4">
    <citation type="journal article" date="2007" name="Protein Expr. Purif.">
        <title>Purification and crystallization of the hydroxylase component of the methanesulfonate monooxygenase from Methylosulfonomonas methylovora strain M2.</title>
        <authorList>
            <person name="Jamshad M."/>
            <person name="Murrell J.C."/>
            <person name="Fueloep V."/>
        </authorList>
    </citation>
    <scope>PROTEIN SEQUENCE OF 67-79 AND 154-167</scope>
    <scope>CATALYTIC ACTIVITY</scope>
</reference>
<reference key="5">
    <citation type="journal article" date="1996" name="Microbiology">
        <title>Metabolism of methanesulfonic acid involves a multicomponent monooxygenase enzyme.</title>
        <authorList>
            <person name="Higgins T.P."/>
            <person name="Davey M."/>
            <person name="Trickett J."/>
            <person name="Kelly D.P."/>
            <person name="Murrell J.C."/>
        </authorList>
    </citation>
    <scope>FUNCTION</scope>
    <scope>CATALYTIC ACTIVITY</scope>
    <scope>INDUCTION</scope>
    <scope>ACTIVITY REGULATION</scope>
    <scope>SUBCELLULAR LOCATION</scope>
    <scope>BIOPHYSICOCHEMICAL PROPERTIES</scope>
</reference>
<feature type="chain" id="PRO_0000430802" description="Methanesulfonate monooxygenase hydroxylase subunit beta">
    <location>
        <begin position="1"/>
        <end position="181"/>
    </location>
</feature>
<organism evidence="8">
    <name type="scientific">Methylosulfonomonas methylovora</name>
    <dbReference type="NCBI Taxonomy" id="50057"/>
    <lineage>
        <taxon>Bacteria</taxon>
        <taxon>Pseudomonadati</taxon>
        <taxon>Pseudomonadota</taxon>
        <taxon>Alphaproteobacteria</taxon>
        <taxon>Hyphomicrobiales</taxon>
        <taxon>Methylosulfonomonas</taxon>
    </lineage>
</organism>
<keyword id="KW-0963">Cytoplasm</keyword>
<keyword id="KW-0903">Direct protein sequencing</keyword>
<keyword id="KW-0503">Monooxygenase</keyword>
<keyword id="KW-0520">NAD</keyword>
<keyword id="KW-0560">Oxidoreductase</keyword>
<sequence length="181" mass="20479">MDIQTEMTAPPLSGGLDPAQARDAADAVRNAIYRATILLDSQKWDEWLALCADNFVYDIKAWSPEINYDMTYLHGSRKDLEALIRLLPKHNTDHSPLTRHTTIYTVDVADEGATAKGVSAFIVFQHLLDGTNSHIDAGESRLFLVGKYYDTFRIENGQALFTSRETRLENRRLDKGSHWPI</sequence>
<gene>
    <name evidence="5" type="primary">msmB</name>
</gene>
<dbReference type="EC" id="1.14.13.111" evidence="1 3 4"/>
<dbReference type="EMBL" id="AF091716">
    <property type="protein sequence ID" value="AAD26620.1"/>
    <property type="molecule type" value="Genomic_DNA"/>
</dbReference>
<dbReference type="SMR" id="Q9X405"/>
<dbReference type="KEGG" id="ag:AAD26620"/>
<dbReference type="BioCyc" id="MetaCyc:MONOMER-14212"/>
<dbReference type="GO" id="GO:0005737">
    <property type="term" value="C:cytoplasm"/>
    <property type="evidence" value="ECO:0007669"/>
    <property type="project" value="UniProtKB-SubCell"/>
</dbReference>
<dbReference type="GO" id="GO:0018648">
    <property type="term" value="F:methanesulfonate monooxygenase activity"/>
    <property type="evidence" value="ECO:0007669"/>
    <property type="project" value="UniProtKB-EC"/>
</dbReference>
<dbReference type="Gene3D" id="3.10.450.50">
    <property type="match status" value="1"/>
</dbReference>
<dbReference type="InterPro" id="IPR032710">
    <property type="entry name" value="NTF2-like_dom_sf"/>
</dbReference>
<dbReference type="InterPro" id="IPR037401">
    <property type="entry name" value="SnoaL-like"/>
</dbReference>
<dbReference type="Pfam" id="PF13577">
    <property type="entry name" value="SnoaL_4"/>
    <property type="match status" value="1"/>
</dbReference>
<dbReference type="SUPFAM" id="SSF54427">
    <property type="entry name" value="NTF2-like"/>
    <property type="match status" value="1"/>
</dbReference>
<comment type="function">
    <text evidence="4">Methanesulfonate monooxygenase (MSAMO) mediates the primary degradation of methanesulfonic acid (MSA) to produce formaldehyd and inorganic sulfite by initial hydroxylation of the carbon atom prior to spontaneous cleavage of the unstable hydroxymethanesulfonic acid. MSAMO has a restricted substrate range that includes only the short-chain aliphatic sulfonates (methane- to butanesulfonate) and excludes all larger molecules, such as arylsulfonates and aromatic sulfonates. All MSAMO components are required for enzyme activity.</text>
</comment>
<comment type="catalytic activity">
    <reaction evidence="1 3 4">
        <text>methanesulfonate + NADH + O2 = sulfite + formaldehyde + NAD(+) + H2O</text>
        <dbReference type="Rhea" id="RHEA:26077"/>
        <dbReference type="ChEBI" id="CHEBI:15377"/>
        <dbReference type="ChEBI" id="CHEBI:15379"/>
        <dbReference type="ChEBI" id="CHEBI:16842"/>
        <dbReference type="ChEBI" id="CHEBI:17359"/>
        <dbReference type="ChEBI" id="CHEBI:25224"/>
        <dbReference type="ChEBI" id="CHEBI:57540"/>
        <dbReference type="ChEBI" id="CHEBI:57945"/>
        <dbReference type="EC" id="1.14.13.111"/>
    </reaction>
</comment>
<comment type="activity regulation">
    <text evidence="4">MSAMO is inhibited by metal chelators (such as bathophenanthroline, bathocuprione, neocuprione, alpha-alpha-dipyridil and sodium EDTA) and by sodium azide, sodium arsenate and potassium cyanide.</text>
</comment>
<comment type="biophysicochemical properties">
    <kinetics>
        <KM evidence="4">48 uM for NADH</KM>
        <KM evidence="4">61.5 uM for ethane sulfonic acid</KM>
        <Vmax evidence="4">65.5 nmol/min/mg enzyme with NADH as substrate</Vmax>
        <Vmax evidence="4">38.7 nmol/min/mg enzyme with ethane sulfonic acid as substrate</Vmax>
        <text evidence="4">Cell-free extracts of MSA-grown strain M2 have been used. Vmax of a cytoplasmic fraction has shown to be lower as was that of a reconstituted enzyme from partially purified fractions which was increased by addition of FAD and Fe(2+).</text>
    </kinetics>
</comment>
<comment type="subunit">
    <text evidence="5 6">The MSA monooxygenase system consists of 4 proteins: the 2 subunits of the hydroxylase component (MsmA and MsmB), a ferredoxin (MsmC) and a ferredoxin reductase (MsmD). The hydroxylase component consists of a 3 alpha (MsmA) and 3 beta (MsmB) subunits.</text>
</comment>
<comment type="subcellular location">
    <subcellularLocation>
        <location evidence="1 4">Cytoplasm</location>
    </subcellularLocation>
</comment>
<comment type="induction">
    <text evidence="2">The msmABCD operon is induced by methanesulfonic acid (MSA).</text>
</comment>
<comment type="similarity">
    <text evidence="7">Belongs to the bacterial ring-hydroxylating dioxygenase beta subunit family.</text>
</comment>
<evidence type="ECO:0000269" key="1">
    <source>
    </source>
</evidence>
<evidence type="ECO:0000269" key="2">
    <source>
    </source>
</evidence>
<evidence type="ECO:0000269" key="3">
    <source>
    </source>
</evidence>
<evidence type="ECO:0000269" key="4">
    <source>
    </source>
</evidence>
<evidence type="ECO:0000303" key="5">
    <source>
    </source>
</evidence>
<evidence type="ECO:0000303" key="6">
    <source>
    </source>
</evidence>
<evidence type="ECO:0000305" key="7"/>
<evidence type="ECO:0000312" key="8">
    <source>
        <dbReference type="EMBL" id="AAD26620.1"/>
    </source>
</evidence>
<protein>
    <recommendedName>
        <fullName evidence="7">Methanesulfonate monooxygenase hydroxylase subunit beta</fullName>
        <ecNumber evidence="1 3 4">1.14.13.111</ecNumber>
    </recommendedName>
    <alternativeName>
        <fullName evidence="5">Methanesulfonic acid monooxygenase hydroxylase small subunit</fullName>
    </alternativeName>
    <alternativeName>
        <fullName evidence="6">Methanesulfonic acid monooxygenase hydroxylase subunit beta</fullName>
        <shortName evidence="6">MSA monooxygenase hydroxylase subunit beta</shortName>
        <shortName evidence="6">MSAMO hydroxylase subunit beta</shortName>
    </alternativeName>
</protein>
<name>MSMB_METHY</name>
<proteinExistence type="evidence at protein level"/>